<gene>
    <name evidence="1" type="primary">groEL</name>
    <name evidence="1" type="synonym">groL</name>
    <name type="ordered locus">SEN4100</name>
</gene>
<protein>
    <recommendedName>
        <fullName evidence="1">Chaperonin GroEL</fullName>
        <ecNumber evidence="1">5.6.1.7</ecNumber>
    </recommendedName>
    <alternativeName>
        <fullName evidence="1">60 kDa chaperonin</fullName>
    </alternativeName>
    <alternativeName>
        <fullName evidence="1">Chaperonin-60</fullName>
        <shortName evidence="1">Cpn60</shortName>
    </alternativeName>
</protein>
<reference key="1">
    <citation type="journal article" date="2008" name="Genome Res.">
        <title>Comparative genome analysis of Salmonella enteritidis PT4 and Salmonella gallinarum 287/91 provides insights into evolutionary and host adaptation pathways.</title>
        <authorList>
            <person name="Thomson N.R."/>
            <person name="Clayton D.J."/>
            <person name="Windhorst D."/>
            <person name="Vernikos G."/>
            <person name="Davidson S."/>
            <person name="Churcher C."/>
            <person name="Quail M.A."/>
            <person name="Stevens M."/>
            <person name="Jones M.A."/>
            <person name="Watson M."/>
            <person name="Barron A."/>
            <person name="Layton A."/>
            <person name="Pickard D."/>
            <person name="Kingsley R.A."/>
            <person name="Bignell A."/>
            <person name="Clark L."/>
            <person name="Harris B."/>
            <person name="Ormond D."/>
            <person name="Abdellah Z."/>
            <person name="Brooks K."/>
            <person name="Cherevach I."/>
            <person name="Chillingworth T."/>
            <person name="Woodward J."/>
            <person name="Norberczak H."/>
            <person name="Lord A."/>
            <person name="Arrowsmith C."/>
            <person name="Jagels K."/>
            <person name="Moule S."/>
            <person name="Mungall K."/>
            <person name="Saunders M."/>
            <person name="Whitehead S."/>
            <person name="Chabalgoity J.A."/>
            <person name="Maskell D."/>
            <person name="Humphreys T."/>
            <person name="Roberts M."/>
            <person name="Barrow P.A."/>
            <person name="Dougan G."/>
            <person name="Parkhill J."/>
        </authorList>
    </citation>
    <scope>NUCLEOTIDE SEQUENCE [LARGE SCALE GENOMIC DNA]</scope>
    <source>
        <strain>P125109</strain>
    </source>
</reference>
<accession>B5R005</accession>
<dbReference type="EC" id="5.6.1.7" evidence="1"/>
<dbReference type="EMBL" id="AM933172">
    <property type="protein sequence ID" value="CAR35660.1"/>
    <property type="molecule type" value="Genomic_DNA"/>
</dbReference>
<dbReference type="RefSeq" id="WP_000729126.1">
    <property type="nucleotide sequence ID" value="NC_011294.1"/>
</dbReference>
<dbReference type="SMR" id="B5R005"/>
<dbReference type="KEGG" id="set:SEN4100"/>
<dbReference type="HOGENOM" id="CLU_016503_3_0_6"/>
<dbReference type="Proteomes" id="UP000000613">
    <property type="component" value="Chromosome"/>
</dbReference>
<dbReference type="GO" id="GO:0005737">
    <property type="term" value="C:cytoplasm"/>
    <property type="evidence" value="ECO:0007669"/>
    <property type="project" value="UniProtKB-SubCell"/>
</dbReference>
<dbReference type="GO" id="GO:0005524">
    <property type="term" value="F:ATP binding"/>
    <property type="evidence" value="ECO:0007669"/>
    <property type="project" value="UniProtKB-UniRule"/>
</dbReference>
<dbReference type="GO" id="GO:0140662">
    <property type="term" value="F:ATP-dependent protein folding chaperone"/>
    <property type="evidence" value="ECO:0007669"/>
    <property type="project" value="InterPro"/>
</dbReference>
<dbReference type="GO" id="GO:0016853">
    <property type="term" value="F:isomerase activity"/>
    <property type="evidence" value="ECO:0007669"/>
    <property type="project" value="UniProtKB-KW"/>
</dbReference>
<dbReference type="GO" id="GO:0051082">
    <property type="term" value="F:unfolded protein binding"/>
    <property type="evidence" value="ECO:0007669"/>
    <property type="project" value="UniProtKB-UniRule"/>
</dbReference>
<dbReference type="GO" id="GO:0042026">
    <property type="term" value="P:protein refolding"/>
    <property type="evidence" value="ECO:0007669"/>
    <property type="project" value="UniProtKB-UniRule"/>
</dbReference>
<dbReference type="CDD" id="cd03344">
    <property type="entry name" value="GroEL"/>
    <property type="match status" value="1"/>
</dbReference>
<dbReference type="FunFam" id="1.10.560.10:FF:000001">
    <property type="entry name" value="60 kDa chaperonin"/>
    <property type="match status" value="1"/>
</dbReference>
<dbReference type="FunFam" id="3.50.7.10:FF:000001">
    <property type="entry name" value="60 kDa chaperonin"/>
    <property type="match status" value="1"/>
</dbReference>
<dbReference type="Gene3D" id="3.50.7.10">
    <property type="entry name" value="GroEL"/>
    <property type="match status" value="1"/>
</dbReference>
<dbReference type="Gene3D" id="1.10.560.10">
    <property type="entry name" value="GroEL-like equatorial domain"/>
    <property type="match status" value="1"/>
</dbReference>
<dbReference type="Gene3D" id="3.30.260.10">
    <property type="entry name" value="TCP-1-like chaperonin intermediate domain"/>
    <property type="match status" value="1"/>
</dbReference>
<dbReference type="HAMAP" id="MF_00600">
    <property type="entry name" value="CH60"/>
    <property type="match status" value="1"/>
</dbReference>
<dbReference type="InterPro" id="IPR018370">
    <property type="entry name" value="Chaperonin_Cpn60_CS"/>
</dbReference>
<dbReference type="InterPro" id="IPR001844">
    <property type="entry name" value="Cpn60/GroEL"/>
</dbReference>
<dbReference type="InterPro" id="IPR002423">
    <property type="entry name" value="Cpn60/GroEL/TCP-1"/>
</dbReference>
<dbReference type="InterPro" id="IPR027409">
    <property type="entry name" value="GroEL-like_apical_dom_sf"/>
</dbReference>
<dbReference type="InterPro" id="IPR027413">
    <property type="entry name" value="GROEL-like_equatorial_sf"/>
</dbReference>
<dbReference type="InterPro" id="IPR027410">
    <property type="entry name" value="TCP-1-like_intermed_sf"/>
</dbReference>
<dbReference type="NCBIfam" id="TIGR02348">
    <property type="entry name" value="GroEL"/>
    <property type="match status" value="1"/>
</dbReference>
<dbReference type="NCBIfam" id="NF000592">
    <property type="entry name" value="PRK00013.1"/>
    <property type="match status" value="1"/>
</dbReference>
<dbReference type="NCBIfam" id="NF009487">
    <property type="entry name" value="PRK12849.1"/>
    <property type="match status" value="1"/>
</dbReference>
<dbReference type="NCBIfam" id="NF009488">
    <property type="entry name" value="PRK12850.1"/>
    <property type="match status" value="1"/>
</dbReference>
<dbReference type="NCBIfam" id="NF009489">
    <property type="entry name" value="PRK12851.1"/>
    <property type="match status" value="1"/>
</dbReference>
<dbReference type="PANTHER" id="PTHR45633">
    <property type="entry name" value="60 KDA HEAT SHOCK PROTEIN, MITOCHONDRIAL"/>
    <property type="match status" value="1"/>
</dbReference>
<dbReference type="Pfam" id="PF00118">
    <property type="entry name" value="Cpn60_TCP1"/>
    <property type="match status" value="1"/>
</dbReference>
<dbReference type="PRINTS" id="PR00298">
    <property type="entry name" value="CHAPERONIN60"/>
</dbReference>
<dbReference type="SUPFAM" id="SSF52029">
    <property type="entry name" value="GroEL apical domain-like"/>
    <property type="match status" value="1"/>
</dbReference>
<dbReference type="SUPFAM" id="SSF48592">
    <property type="entry name" value="GroEL equatorial domain-like"/>
    <property type="match status" value="1"/>
</dbReference>
<dbReference type="SUPFAM" id="SSF54849">
    <property type="entry name" value="GroEL-intermediate domain like"/>
    <property type="match status" value="1"/>
</dbReference>
<dbReference type="PROSITE" id="PS00296">
    <property type="entry name" value="CHAPERONINS_CPN60"/>
    <property type="match status" value="1"/>
</dbReference>
<feature type="chain" id="PRO_1000130053" description="Chaperonin GroEL">
    <location>
        <begin position="1"/>
        <end position="548"/>
    </location>
</feature>
<feature type="binding site" evidence="1">
    <location>
        <begin position="30"/>
        <end position="33"/>
    </location>
    <ligand>
        <name>ATP</name>
        <dbReference type="ChEBI" id="CHEBI:30616"/>
    </ligand>
</feature>
<feature type="binding site" evidence="1">
    <location>
        <position position="51"/>
    </location>
    <ligand>
        <name>ATP</name>
        <dbReference type="ChEBI" id="CHEBI:30616"/>
    </ligand>
</feature>
<feature type="binding site" evidence="1">
    <location>
        <begin position="87"/>
        <end position="91"/>
    </location>
    <ligand>
        <name>ATP</name>
        <dbReference type="ChEBI" id="CHEBI:30616"/>
    </ligand>
</feature>
<feature type="binding site" evidence="1">
    <location>
        <position position="415"/>
    </location>
    <ligand>
        <name>ATP</name>
        <dbReference type="ChEBI" id="CHEBI:30616"/>
    </ligand>
</feature>
<feature type="binding site" evidence="1">
    <location>
        <begin position="479"/>
        <end position="481"/>
    </location>
    <ligand>
        <name>ATP</name>
        <dbReference type="ChEBI" id="CHEBI:30616"/>
    </ligand>
</feature>
<feature type="binding site" evidence="1">
    <location>
        <position position="495"/>
    </location>
    <ligand>
        <name>ATP</name>
        <dbReference type="ChEBI" id="CHEBI:30616"/>
    </ligand>
</feature>
<organism>
    <name type="scientific">Salmonella enteritidis PT4 (strain P125109)</name>
    <dbReference type="NCBI Taxonomy" id="550537"/>
    <lineage>
        <taxon>Bacteria</taxon>
        <taxon>Pseudomonadati</taxon>
        <taxon>Pseudomonadota</taxon>
        <taxon>Gammaproteobacteria</taxon>
        <taxon>Enterobacterales</taxon>
        <taxon>Enterobacteriaceae</taxon>
        <taxon>Salmonella</taxon>
    </lineage>
</organism>
<evidence type="ECO:0000255" key="1">
    <source>
        <dbReference type="HAMAP-Rule" id="MF_00600"/>
    </source>
</evidence>
<keyword id="KW-0067">ATP-binding</keyword>
<keyword id="KW-0143">Chaperone</keyword>
<keyword id="KW-0963">Cytoplasm</keyword>
<keyword id="KW-0413">Isomerase</keyword>
<keyword id="KW-0547">Nucleotide-binding</keyword>
<comment type="function">
    <text evidence="1">Together with its co-chaperonin GroES, plays an essential role in assisting protein folding. The GroEL-GroES system forms a nano-cage that allows encapsulation of the non-native substrate proteins and provides a physical environment optimized to promote and accelerate protein folding.</text>
</comment>
<comment type="catalytic activity">
    <reaction evidence="1">
        <text>ATP + H2O + a folded polypeptide = ADP + phosphate + an unfolded polypeptide.</text>
        <dbReference type="EC" id="5.6.1.7"/>
    </reaction>
</comment>
<comment type="subunit">
    <text evidence="1">Forms a cylinder of 14 subunits composed of two heptameric rings stacked back-to-back. Interacts with the co-chaperonin GroES.</text>
</comment>
<comment type="subcellular location">
    <subcellularLocation>
        <location evidence="1">Cytoplasm</location>
    </subcellularLocation>
</comment>
<comment type="similarity">
    <text evidence="1">Belongs to the chaperonin (HSP60) family.</text>
</comment>
<name>CH60_SALEP</name>
<sequence length="548" mass="57286">MAAKDVKFGNDARVKMLRGVNVLADAVKVTLGPKGRNVVLDKSFGAPTITKDGVSVAREIELEDKFENMGAQMVKEVASKANDAAGDGTTTATVLAQSIITEGLKAVAAGMNPMDLKRGIDKAVAAAVEELKALSVPCSDSKAIAQVGTISANSDETVGKLIAEAMDKVGKEGVITVEDGTGLQDELDVVEGMQFDRGYLSPYFINKPETGAVELESPFILLADKKISNIREMLPVLEAVAKAGKPLLIIAEDVEGEALATLVVNTMRGIVKVAAVKAPGFGDRRKAMLQDIATLTGGTVISEEIGMELEKATLEDLGQAKRVVINKDTTTIIDGVGEEAAIQGRVAQIRQQIEEATSDYDREKLQERVAKLAGGVAVIKVGAATEVEMKEKKARVEDALHATRAAVEEGVVAGGGVALIRVASKIADLKGQNEDQNVGIKVALRAMEAPLRQIVLNCGEEPSVVANTVKGGDGNYGYNAATEEYGNMIDMGILDPTKVTRSALQYAASVAGLMITTECMVTDLPKSDAPDLGAAGGMGGMGGMGGMM</sequence>
<proteinExistence type="inferred from homology"/>